<dbReference type="EMBL" id="EU085468">
    <property type="protein sequence ID" value="ABW82678.1"/>
    <property type="molecule type" value="mRNA"/>
</dbReference>
<dbReference type="SMR" id="B4XT06"/>
<dbReference type="GO" id="GO:0005576">
    <property type="term" value="C:extracellular region"/>
    <property type="evidence" value="ECO:0007669"/>
    <property type="project" value="UniProtKB-SubCell"/>
</dbReference>
<dbReference type="GO" id="GO:0090729">
    <property type="term" value="F:toxin activity"/>
    <property type="evidence" value="ECO:0007669"/>
    <property type="project" value="UniProtKB-KW"/>
</dbReference>
<dbReference type="CDD" id="cd00037">
    <property type="entry name" value="CLECT"/>
    <property type="match status" value="1"/>
</dbReference>
<dbReference type="FunFam" id="3.10.100.10:FF:000087">
    <property type="entry name" value="Snaclec rhodocetin subunit delta"/>
    <property type="match status" value="1"/>
</dbReference>
<dbReference type="Gene3D" id="3.10.100.10">
    <property type="entry name" value="Mannose-Binding Protein A, subunit A"/>
    <property type="match status" value="1"/>
</dbReference>
<dbReference type="InterPro" id="IPR001304">
    <property type="entry name" value="C-type_lectin-like"/>
</dbReference>
<dbReference type="InterPro" id="IPR016186">
    <property type="entry name" value="C-type_lectin-like/link_sf"/>
</dbReference>
<dbReference type="InterPro" id="IPR050111">
    <property type="entry name" value="C-type_lectin/snaclec_domain"/>
</dbReference>
<dbReference type="InterPro" id="IPR018378">
    <property type="entry name" value="C-type_lectin_CS"/>
</dbReference>
<dbReference type="InterPro" id="IPR016187">
    <property type="entry name" value="CTDL_fold"/>
</dbReference>
<dbReference type="PANTHER" id="PTHR22803">
    <property type="entry name" value="MANNOSE, PHOSPHOLIPASE, LECTIN RECEPTOR RELATED"/>
    <property type="match status" value="1"/>
</dbReference>
<dbReference type="Pfam" id="PF00059">
    <property type="entry name" value="Lectin_C"/>
    <property type="match status" value="1"/>
</dbReference>
<dbReference type="SMART" id="SM00034">
    <property type="entry name" value="CLECT"/>
    <property type="match status" value="1"/>
</dbReference>
<dbReference type="SUPFAM" id="SSF56436">
    <property type="entry name" value="C-type lectin-like"/>
    <property type="match status" value="1"/>
</dbReference>
<dbReference type="PROSITE" id="PS00615">
    <property type="entry name" value="C_TYPE_LECTIN_1"/>
    <property type="match status" value="1"/>
</dbReference>
<dbReference type="PROSITE" id="PS50041">
    <property type="entry name" value="C_TYPE_LECTIN_2"/>
    <property type="match status" value="1"/>
</dbReference>
<keyword id="KW-1015">Disulfide bond</keyword>
<keyword id="KW-0325">Glycoprotein</keyword>
<keyword id="KW-1199">Hemostasis impairing toxin</keyword>
<keyword id="KW-0964">Secreted</keyword>
<keyword id="KW-0800">Toxin</keyword>
<name>SLB7_MACLB</name>
<reference key="1">
    <citation type="journal article" date="2009" name="Toxicon">
        <title>C-type lectin protein isoforms of Macrovipera lebetina: cDNA cloning and genetic diversity.</title>
        <authorList>
            <person name="Jebali J."/>
            <person name="Bazaa A."/>
            <person name="Sarray S."/>
            <person name="Benhaj K."/>
            <person name="Karboul A."/>
            <person name="El Ayeb M."/>
            <person name="Marrakchi N."/>
            <person name="Gargouri A."/>
        </authorList>
    </citation>
    <scope>NUCLEOTIDE SEQUENCE [MRNA]</scope>
</reference>
<accession>B4XT06</accession>
<sequence>DCPWDWSSHEGHCYKVFKLRKTWEDAEKFCTEQARGGHLISLKSTEEVDFMIKLAYPILKANLVWIGLRDFWRDCHMGWRDHANLLYKAWSDEPNCFVAKTTDNQWFRRKCNISQYFVCQSRVPR</sequence>
<proteinExistence type="evidence at transcript level"/>
<comment type="function">
    <text evidence="1">Interferes with one step of hemostasis (modulation of platelet aggregation, or coagulation cascade, for example).</text>
</comment>
<comment type="subunit">
    <text evidence="1">Heterodimer; disulfide-linked.</text>
</comment>
<comment type="subcellular location">
    <subcellularLocation>
        <location evidence="1">Secreted</location>
    </subcellularLocation>
</comment>
<comment type="tissue specificity">
    <text>Expressed by the venom gland.</text>
</comment>
<comment type="miscellaneous">
    <text>Shows greater sequence similarity to the beta than alpha subunits compared to other heterodimer snaclecs.</text>
</comment>
<comment type="similarity">
    <text evidence="4">Belongs to the snaclec family.</text>
</comment>
<organism>
    <name type="scientific">Macrovipera lebetinus</name>
    <name type="common">Levantine viper</name>
    <name type="synonym">Vipera lebetina</name>
    <dbReference type="NCBI Taxonomy" id="3148341"/>
    <lineage>
        <taxon>Eukaryota</taxon>
        <taxon>Metazoa</taxon>
        <taxon>Chordata</taxon>
        <taxon>Craniata</taxon>
        <taxon>Vertebrata</taxon>
        <taxon>Euteleostomi</taxon>
        <taxon>Lepidosauria</taxon>
        <taxon>Squamata</taxon>
        <taxon>Bifurcata</taxon>
        <taxon>Unidentata</taxon>
        <taxon>Episquamata</taxon>
        <taxon>Toxicofera</taxon>
        <taxon>Serpentes</taxon>
        <taxon>Colubroidea</taxon>
        <taxon>Viperidae</taxon>
        <taxon>Viperinae</taxon>
        <taxon>Macrovipera</taxon>
    </lineage>
</organism>
<protein>
    <recommendedName>
        <fullName>Snaclec B7</fullName>
    </recommendedName>
    <alternativeName>
        <fullName>C-type lectin B7</fullName>
    </alternativeName>
</protein>
<evidence type="ECO:0000250" key="1"/>
<evidence type="ECO:0000255" key="2"/>
<evidence type="ECO:0000255" key="3">
    <source>
        <dbReference type="PROSITE-ProRule" id="PRU00040"/>
    </source>
</evidence>
<evidence type="ECO:0000305" key="4"/>
<feature type="chain" id="PRO_0000356338" description="Snaclec B7">
    <location>
        <begin position="1" status="less than"/>
        <end position="125"/>
    </location>
</feature>
<feature type="domain" description="C-type lectin" evidence="3">
    <location>
        <begin position="9"/>
        <end position="120"/>
    </location>
</feature>
<feature type="glycosylation site" description="N-linked (GlcNAc...) asparagine" evidence="2">
    <location>
        <position position="112"/>
    </location>
</feature>
<feature type="disulfide bond" evidence="3">
    <location>
        <begin position="2"/>
        <end position="13"/>
    </location>
</feature>
<feature type="disulfide bond" evidence="3">
    <location>
        <begin position="30"/>
        <end position="119"/>
    </location>
</feature>
<feature type="disulfide bond" description="Interchain" evidence="3">
    <location>
        <position position="75"/>
    </location>
</feature>
<feature type="disulfide bond" evidence="3">
    <location>
        <begin position="96"/>
        <end position="111"/>
    </location>
</feature>
<feature type="non-terminal residue">
    <location>
        <position position="1"/>
    </location>
</feature>